<feature type="chain" id="PRO_0000373291" description="Protein MGF 360-14L">
    <location>
        <begin position="1"/>
        <end position="357"/>
    </location>
</feature>
<reference key="1">
    <citation type="journal article" date="1994" name="Virology">
        <title>Two novel multigene families, 530 and 300, in the terminal variable regions of African swine fever virus genome.</title>
        <authorList>
            <person name="Yozawa T."/>
            <person name="Kutish G.F."/>
            <person name="Afonso C.L."/>
            <person name="Lu Z."/>
            <person name="Rock D.L."/>
        </authorList>
    </citation>
    <scope>NUCLEOTIDE SEQUENCE [GENOMIC DNA]</scope>
</reference>
<reference key="2">
    <citation type="submission" date="2003-03" db="EMBL/GenBank/DDBJ databases">
        <title>African swine fever virus genomes.</title>
        <authorList>
            <person name="Kutish G.F."/>
            <person name="Rock D.L."/>
        </authorList>
    </citation>
    <scope>NUCLEOTIDE SEQUENCE [LARGE SCALE GENOMIC DNA]</scope>
</reference>
<organismHost>
    <name type="scientific">Ornithodoros</name>
    <name type="common">relapsing fever ticks</name>
    <dbReference type="NCBI Taxonomy" id="6937"/>
</organismHost>
<organismHost>
    <name type="scientific">Phacochoerus aethiopicus</name>
    <name type="common">Warthog</name>
    <dbReference type="NCBI Taxonomy" id="85517"/>
</organismHost>
<organismHost>
    <name type="scientific">Phacochoerus africanus</name>
    <name type="common">Warthog</name>
    <dbReference type="NCBI Taxonomy" id="41426"/>
</organismHost>
<organismHost>
    <name type="scientific">Potamochoerus larvatus</name>
    <name type="common">Bushpig</name>
    <dbReference type="NCBI Taxonomy" id="273792"/>
</organismHost>
<organismHost>
    <name type="scientific">Sus scrofa</name>
    <name type="common">Pig</name>
    <dbReference type="NCBI Taxonomy" id="9823"/>
</organismHost>
<proteinExistence type="inferred from homology"/>
<accession>Q65127</accession>
<protein>
    <recommendedName>
        <fullName>Protein MGF 360-14L</fullName>
    </recommendedName>
</protein>
<gene>
    <name type="ordered locus">Mal-034</name>
</gene>
<evidence type="ECO:0000250" key="1"/>
<evidence type="ECO:0000250" key="2">
    <source>
        <dbReference type="UniProtKB" id="P0C9Q5"/>
    </source>
</evidence>
<evidence type="ECO:0000305" key="3"/>
<name>36014_ASFM2</name>
<sequence>MLSLQTLAKKVVACNYLSSDYDYTLQRFGLWWDLGPIHLCNTCKQIFSYKHLQCFSEDDLCLEAALVKAVKSDNLELIRLFVDWGANPEYGLIRVPAVHLKRLCMELGGLTPVSESRLLEILKEVADLKSCAGVLLGYDMFCHNPLLETVTRTTLDTVMYTRSKIPLTGDTAHLLLSKFWFALALRHNFTKAIHYFYEKHKNQLYWRLTCSLYFNNIFDLHELCCKKEICISPNLMMKFACLREENYAAIYYCHMLGASLDYGMNLSIYNNNTLNLFFCIDLGATNFDRARLIARRVYMYNLSNLFLVKQLFSRDVSLILDLTEPQAIYDMLNTYTSKNLKQAEEYFTAHPEIVVID</sequence>
<dbReference type="EMBL" id="U03762">
    <property type="protein sequence ID" value="AAA50540.1"/>
    <property type="molecule type" value="Genomic_DNA"/>
</dbReference>
<dbReference type="EMBL" id="AY261361">
    <property type="status" value="NOT_ANNOTATED_CDS"/>
    <property type="molecule type" value="Genomic_DNA"/>
</dbReference>
<dbReference type="Proteomes" id="UP000000860">
    <property type="component" value="Segment"/>
</dbReference>
<dbReference type="GO" id="GO:0030430">
    <property type="term" value="C:host cell cytoplasm"/>
    <property type="evidence" value="ECO:0007669"/>
    <property type="project" value="UniProtKB-SubCell"/>
</dbReference>
<dbReference type="GO" id="GO:0039548">
    <property type="term" value="P:symbiont-mediated suppression of host cytoplasmic pattern recognition receptor signaling pathway via inhibition of IRF3 activity"/>
    <property type="evidence" value="ECO:0007669"/>
    <property type="project" value="UniProtKB-KW"/>
</dbReference>
<dbReference type="GO" id="GO:0042330">
    <property type="term" value="P:taxis"/>
    <property type="evidence" value="ECO:0007669"/>
    <property type="project" value="InterPro"/>
</dbReference>
<dbReference type="InterPro" id="IPR002595">
    <property type="entry name" value="ASFV_MGF360"/>
</dbReference>
<dbReference type="Pfam" id="PF01671">
    <property type="entry name" value="ASFV_360"/>
    <property type="match status" value="1"/>
</dbReference>
<organism>
    <name type="scientific">African swine fever virus (isolate Tick/Malawi/Lil 20-1/1983)</name>
    <name type="common">ASFV</name>
    <dbReference type="NCBI Taxonomy" id="10500"/>
    <lineage>
        <taxon>Viruses</taxon>
        <taxon>Varidnaviria</taxon>
        <taxon>Bamfordvirae</taxon>
        <taxon>Nucleocytoviricota</taxon>
        <taxon>Pokkesviricetes</taxon>
        <taxon>Asfuvirales</taxon>
        <taxon>Asfarviridae</taxon>
        <taxon>Asfivirus</taxon>
        <taxon>African swine fever virus</taxon>
    </lineage>
</organism>
<comment type="function">
    <text evidence="1 2">Plays a role in virus cell tropism, and may be required for efficient virus replication in macrophages. Also inhibits the host cGAS/STING-mediated type I interferon production by inducing host IRF3 degradation through the proteasome pathway.</text>
</comment>
<comment type="subunit">
    <text evidence="2">Interacts with host IRF3 and TRIM21; these interactions mediates degradation of IRF3 through TRIM21 and ubiquitin-meditated proteolysis.</text>
</comment>
<comment type="subcellular location">
    <subcellularLocation>
        <location evidence="2">Host cytoplasm</location>
    </subcellularLocation>
</comment>
<comment type="similarity">
    <text evidence="3">Belongs to the asfivirus MGF 360 family.</text>
</comment>
<keyword id="KW-1035">Host cytoplasm</keyword>
<keyword id="KW-0945">Host-virus interaction</keyword>
<keyword id="KW-1090">Inhibition of host innate immune response by virus</keyword>
<keyword id="KW-1092">Inhibition of host IRF3 by virus</keyword>
<keyword id="KW-1113">Inhibition of host RLR pathway by virus</keyword>
<keyword id="KW-0899">Viral immunoevasion</keyword>